<protein>
    <recommendedName>
        <fullName>3-hexulose-6-phosphate synthase 2</fullName>
        <shortName>HPS 2</shortName>
        <ecNumber>4.1.2.43</ecNumber>
    </recommendedName>
    <alternativeName>
        <fullName>D-arabino-3-hexulose-6-phosphate formaldehyde lyase 2</fullName>
    </alternativeName>
</protein>
<evidence type="ECO:0000250" key="1"/>
<evidence type="ECO:0000305" key="2"/>
<accession>Q49WT0</accession>
<organism>
    <name type="scientific">Staphylococcus saprophyticus subsp. saprophyticus (strain ATCC 15305 / DSM 20229 / NCIMB 8711 / NCTC 7292 / S-41)</name>
    <dbReference type="NCBI Taxonomy" id="342451"/>
    <lineage>
        <taxon>Bacteria</taxon>
        <taxon>Bacillati</taxon>
        <taxon>Bacillota</taxon>
        <taxon>Bacilli</taxon>
        <taxon>Bacillales</taxon>
        <taxon>Staphylococcaceae</taxon>
        <taxon>Staphylococcus</taxon>
    </lineage>
</organism>
<name>HPS2_STAS1</name>
<dbReference type="EC" id="4.1.2.43"/>
<dbReference type="EMBL" id="AP008934">
    <property type="protein sequence ID" value="BAE18771.1"/>
    <property type="molecule type" value="Genomic_DNA"/>
</dbReference>
<dbReference type="RefSeq" id="WP_011303362.1">
    <property type="nucleotide sequence ID" value="NC_007350.1"/>
</dbReference>
<dbReference type="SMR" id="Q49WT0"/>
<dbReference type="GeneID" id="3615233"/>
<dbReference type="KEGG" id="ssp:SSP1626"/>
<dbReference type="eggNOG" id="COG0269">
    <property type="taxonomic scope" value="Bacteria"/>
</dbReference>
<dbReference type="HOGENOM" id="CLU_081825_1_0_9"/>
<dbReference type="OrthoDB" id="43475at2"/>
<dbReference type="UniPathway" id="UPA00294">
    <property type="reaction ID" value="UER00434"/>
</dbReference>
<dbReference type="Proteomes" id="UP000006371">
    <property type="component" value="Chromosome"/>
</dbReference>
<dbReference type="GO" id="GO:0033982">
    <property type="term" value="F:3-dehydro-L-gulonate-6-phosphate decarboxylase activity"/>
    <property type="evidence" value="ECO:0007669"/>
    <property type="project" value="TreeGrafter"/>
</dbReference>
<dbReference type="GO" id="GO:0043801">
    <property type="term" value="F:hexulose-6-phosphate synthase activity"/>
    <property type="evidence" value="ECO:0007669"/>
    <property type="project" value="UniProtKB-EC"/>
</dbReference>
<dbReference type="GO" id="GO:0004590">
    <property type="term" value="F:orotidine-5'-phosphate decarboxylase activity"/>
    <property type="evidence" value="ECO:0007669"/>
    <property type="project" value="InterPro"/>
</dbReference>
<dbReference type="GO" id="GO:0006207">
    <property type="term" value="P:'de novo' pyrimidine nucleobase biosynthetic process"/>
    <property type="evidence" value="ECO:0007669"/>
    <property type="project" value="InterPro"/>
</dbReference>
<dbReference type="GO" id="GO:0019647">
    <property type="term" value="P:formaldehyde assimilation via ribulose monophosphate cycle"/>
    <property type="evidence" value="ECO:0007669"/>
    <property type="project" value="UniProtKB-UniPathway"/>
</dbReference>
<dbReference type="GO" id="GO:0019854">
    <property type="term" value="P:L-ascorbic acid catabolic process"/>
    <property type="evidence" value="ECO:0007669"/>
    <property type="project" value="TreeGrafter"/>
</dbReference>
<dbReference type="GO" id="GO:0006730">
    <property type="term" value="P:one-carbon metabolic process"/>
    <property type="evidence" value="ECO:0007669"/>
    <property type="project" value="UniProtKB-KW"/>
</dbReference>
<dbReference type="CDD" id="cd04726">
    <property type="entry name" value="KGPDC_HPS"/>
    <property type="match status" value="1"/>
</dbReference>
<dbReference type="FunFam" id="3.20.20.70:FF:000022">
    <property type="entry name" value="3-keto-L-gulonate-6-phosphate decarboxylase UlaD"/>
    <property type="match status" value="1"/>
</dbReference>
<dbReference type="Gene3D" id="3.20.20.70">
    <property type="entry name" value="Aldolase class I"/>
    <property type="match status" value="1"/>
</dbReference>
<dbReference type="InterPro" id="IPR017553">
    <property type="entry name" value="3-hexulose-6-phosphate_synth"/>
</dbReference>
<dbReference type="InterPro" id="IPR013785">
    <property type="entry name" value="Aldolase_TIM"/>
</dbReference>
<dbReference type="InterPro" id="IPR041710">
    <property type="entry name" value="HPS/KGPDC"/>
</dbReference>
<dbReference type="InterPro" id="IPR001754">
    <property type="entry name" value="OMPdeCOase_dom"/>
</dbReference>
<dbReference type="InterPro" id="IPR011060">
    <property type="entry name" value="RibuloseP-bd_barrel"/>
</dbReference>
<dbReference type="NCBIfam" id="TIGR03128">
    <property type="entry name" value="RuMP_HxlA"/>
    <property type="match status" value="1"/>
</dbReference>
<dbReference type="PANTHER" id="PTHR35039">
    <property type="entry name" value="3-KETO-L-GULONATE-6-PHOSPHATE DECARBOXYLASE SGBH-RELATED"/>
    <property type="match status" value="1"/>
</dbReference>
<dbReference type="PANTHER" id="PTHR35039:SF3">
    <property type="entry name" value="3-KETO-L-GULONATE-6-PHOSPHATE DECARBOXYLASE SGBH-RELATED"/>
    <property type="match status" value="1"/>
</dbReference>
<dbReference type="Pfam" id="PF00215">
    <property type="entry name" value="OMPdecase"/>
    <property type="match status" value="1"/>
</dbReference>
<dbReference type="SMART" id="SM00934">
    <property type="entry name" value="OMPdecase"/>
    <property type="match status" value="1"/>
</dbReference>
<dbReference type="SUPFAM" id="SSF51366">
    <property type="entry name" value="Ribulose-phoshate binding barrel"/>
    <property type="match status" value="1"/>
</dbReference>
<keyword id="KW-0119">Carbohydrate metabolism</keyword>
<keyword id="KW-0456">Lyase</keyword>
<keyword id="KW-0554">One-carbon metabolism</keyword>
<keyword id="KW-1185">Reference proteome</keyword>
<reference key="1">
    <citation type="journal article" date="2005" name="Proc. Natl. Acad. Sci. U.S.A.">
        <title>Whole genome sequence of Staphylococcus saprophyticus reveals the pathogenesis of uncomplicated urinary tract infection.</title>
        <authorList>
            <person name="Kuroda M."/>
            <person name="Yamashita A."/>
            <person name="Hirakawa H."/>
            <person name="Kumano M."/>
            <person name="Morikawa K."/>
            <person name="Higashide M."/>
            <person name="Maruyama A."/>
            <person name="Inose Y."/>
            <person name="Matoba K."/>
            <person name="Toh H."/>
            <person name="Kuhara S."/>
            <person name="Hattori M."/>
            <person name="Ohta T."/>
        </authorList>
    </citation>
    <scope>NUCLEOTIDE SEQUENCE [LARGE SCALE GENOMIC DNA]</scope>
    <source>
        <strain>ATCC 15305 / DSM 20229 / NCIMB 8711 / NCTC 7292 / S-41</strain>
    </source>
</reference>
<proteinExistence type="inferred from homology"/>
<feature type="chain" id="PRO_0000269528" description="3-hexulose-6-phosphate synthase 2">
    <location>
        <begin position="1"/>
        <end position="213"/>
    </location>
</feature>
<comment type="function">
    <text evidence="1">Catalyzes the condensation of ribulose 5-phosphate with formaldehyde to form 3-hexulose 6-phosphate.</text>
</comment>
<comment type="catalytic activity">
    <reaction>
        <text>D-ribulose 5-phosphate + formaldehyde = D-arabino-hex-3-ulose 6-phosphate</text>
        <dbReference type="Rhea" id="RHEA:25201"/>
        <dbReference type="ChEBI" id="CHEBI:16842"/>
        <dbReference type="ChEBI" id="CHEBI:58121"/>
        <dbReference type="ChEBI" id="CHEBI:58542"/>
        <dbReference type="EC" id="4.1.2.43"/>
    </reaction>
</comment>
<comment type="pathway">
    <text>One-carbon metabolism; formaldehyde assimilation via RuMP pathway; D-fructose 6-phosphate from D-ribulose 5-phosphate and formaldehyde: step 1/2.</text>
</comment>
<comment type="similarity">
    <text evidence="2">Belongs to the HPS/KGPDC family. HPS subfamily.</text>
</comment>
<gene>
    <name type="ordered locus">SSP1626</name>
</gene>
<sequence length="213" mass="22596">MELQLAIDLLNKEDAAELANKVKDHVDIVEIGTPIVINEGLPAVQHLNDNVDGVKVLADLKIMDAADYEVSQAVKFGADIVTILGVAEDASIKAAVDEAHKHGKQLLVDMIAVQDLEKRAKDLDDLGADYIAVHTGYDLQAEGQSPLESLRKVKSVISNSKVAVAGGIKPDTIKDIVAENPDLIIVGGGIANADDPVEAAKQCRDIVDAHTKA</sequence>